<name>RNFE_CITK8</name>
<keyword id="KW-0997">Cell inner membrane</keyword>
<keyword id="KW-1003">Cell membrane</keyword>
<keyword id="KW-0249">Electron transport</keyword>
<keyword id="KW-0472">Membrane</keyword>
<keyword id="KW-1185">Reference proteome</keyword>
<keyword id="KW-1278">Translocase</keyword>
<keyword id="KW-0812">Transmembrane</keyword>
<keyword id="KW-1133">Transmembrane helix</keyword>
<keyword id="KW-0813">Transport</keyword>
<organism>
    <name type="scientific">Citrobacter koseri (strain ATCC BAA-895 / CDC 4225-83 / SGSC4696)</name>
    <dbReference type="NCBI Taxonomy" id="290338"/>
    <lineage>
        <taxon>Bacteria</taxon>
        <taxon>Pseudomonadati</taxon>
        <taxon>Pseudomonadota</taxon>
        <taxon>Gammaproteobacteria</taxon>
        <taxon>Enterobacterales</taxon>
        <taxon>Enterobacteriaceae</taxon>
        <taxon>Citrobacter</taxon>
    </lineage>
</organism>
<comment type="function">
    <text evidence="1">Part of a membrane-bound complex that couples electron transfer with translocation of ions across the membrane.</text>
</comment>
<comment type="subunit">
    <text evidence="1">The complex is composed of six subunits: RnfA, RnfB, RnfC, RnfD, RnfE and RnfG.</text>
</comment>
<comment type="subcellular location">
    <subcellularLocation>
        <location evidence="1">Cell inner membrane</location>
        <topology evidence="1">Multi-pass membrane protein</topology>
    </subcellularLocation>
</comment>
<comment type="similarity">
    <text evidence="1">Belongs to the NqrDE/RnfAE family.</text>
</comment>
<evidence type="ECO:0000255" key="1">
    <source>
        <dbReference type="HAMAP-Rule" id="MF_00478"/>
    </source>
</evidence>
<reference key="1">
    <citation type="submission" date="2007-08" db="EMBL/GenBank/DDBJ databases">
        <authorList>
            <consortium name="The Citrobacter koseri Genome Sequencing Project"/>
            <person name="McClelland M."/>
            <person name="Sanderson E.K."/>
            <person name="Porwollik S."/>
            <person name="Spieth J."/>
            <person name="Clifton W.S."/>
            <person name="Latreille P."/>
            <person name="Courtney L."/>
            <person name="Wang C."/>
            <person name="Pepin K."/>
            <person name="Bhonagiri V."/>
            <person name="Nash W."/>
            <person name="Johnson M."/>
            <person name="Thiruvilangam P."/>
            <person name="Wilson R."/>
        </authorList>
    </citation>
    <scope>NUCLEOTIDE SEQUENCE [LARGE SCALE GENOMIC DNA]</scope>
    <source>
        <strain>ATCC BAA-895 / CDC 4225-83 / SGSC4696</strain>
    </source>
</reference>
<dbReference type="EC" id="7.-.-.-" evidence="1"/>
<dbReference type="EMBL" id="CP000822">
    <property type="protein sequence ID" value="ABV12776.1"/>
    <property type="molecule type" value="Genomic_DNA"/>
</dbReference>
<dbReference type="RefSeq" id="WP_012132516.1">
    <property type="nucleotide sequence ID" value="NC_009792.1"/>
</dbReference>
<dbReference type="SMR" id="A8AH13"/>
<dbReference type="STRING" id="290338.CKO_01644"/>
<dbReference type="GeneID" id="45135686"/>
<dbReference type="KEGG" id="cko:CKO_01644"/>
<dbReference type="HOGENOM" id="CLU_046659_1_0_6"/>
<dbReference type="OrthoDB" id="9782945at2"/>
<dbReference type="Proteomes" id="UP000008148">
    <property type="component" value="Chromosome"/>
</dbReference>
<dbReference type="GO" id="GO:0005886">
    <property type="term" value="C:plasma membrane"/>
    <property type="evidence" value="ECO:0007669"/>
    <property type="project" value="UniProtKB-SubCell"/>
</dbReference>
<dbReference type="GO" id="GO:0022900">
    <property type="term" value="P:electron transport chain"/>
    <property type="evidence" value="ECO:0007669"/>
    <property type="project" value="UniProtKB-UniRule"/>
</dbReference>
<dbReference type="HAMAP" id="MF_00478">
    <property type="entry name" value="RsxE_RnfE"/>
    <property type="match status" value="1"/>
</dbReference>
<dbReference type="InterPro" id="IPR003667">
    <property type="entry name" value="NqrDE/RnfAE"/>
</dbReference>
<dbReference type="InterPro" id="IPR010968">
    <property type="entry name" value="RnfE"/>
</dbReference>
<dbReference type="NCBIfam" id="NF009070">
    <property type="entry name" value="PRK12405.1"/>
    <property type="match status" value="1"/>
</dbReference>
<dbReference type="NCBIfam" id="TIGR01948">
    <property type="entry name" value="rnfE"/>
    <property type="match status" value="1"/>
</dbReference>
<dbReference type="PANTHER" id="PTHR30586">
    <property type="entry name" value="ELECTRON TRANSPORT COMPLEX PROTEIN RNFE"/>
    <property type="match status" value="1"/>
</dbReference>
<dbReference type="PANTHER" id="PTHR30586:SF0">
    <property type="entry name" value="ION-TRANSLOCATING OXIDOREDUCTASE COMPLEX SUBUNIT E"/>
    <property type="match status" value="1"/>
</dbReference>
<dbReference type="Pfam" id="PF02508">
    <property type="entry name" value="Rnf-Nqr"/>
    <property type="match status" value="1"/>
</dbReference>
<dbReference type="PIRSF" id="PIRSF006102">
    <property type="entry name" value="NQR_DE"/>
    <property type="match status" value="1"/>
</dbReference>
<protein>
    <recommendedName>
        <fullName evidence="1">Ion-translocating oxidoreductase complex subunit E</fullName>
        <ecNumber evidence="1">7.-.-.-</ecNumber>
    </recommendedName>
    <alternativeName>
        <fullName evidence="1">Rnf electron transport complex subunit E</fullName>
    </alternativeName>
</protein>
<feature type="chain" id="PRO_1000014086" description="Ion-translocating oxidoreductase complex subunit E">
    <location>
        <begin position="1"/>
        <end position="230"/>
    </location>
</feature>
<feature type="transmembrane region" description="Helical" evidence="1">
    <location>
        <begin position="18"/>
        <end position="38"/>
    </location>
</feature>
<feature type="transmembrane region" description="Helical" evidence="1">
    <location>
        <begin position="39"/>
        <end position="59"/>
    </location>
</feature>
<feature type="transmembrane region" description="Helical" evidence="1">
    <location>
        <begin position="63"/>
        <end position="83"/>
    </location>
</feature>
<feature type="transmembrane region" description="Helical" evidence="1">
    <location>
        <begin position="86"/>
        <end position="106"/>
    </location>
</feature>
<feature type="transmembrane region" description="Helical" evidence="1">
    <location>
        <begin position="125"/>
        <end position="145"/>
    </location>
</feature>
<feature type="transmembrane region" description="Helical" evidence="1">
    <location>
        <begin position="182"/>
        <end position="202"/>
    </location>
</feature>
<accession>A8AH13</accession>
<sequence>MSEIKDVIVQGLWKNNSALVQLLGMCPLLAVTSTATNALGLGLATTLVLTLTNLTISALRRWTPAEIRIPIYVMIIASVVSAVQMLINAYAFGLYQSLGIFIPLIVTNCIVVGRAEAFAAKKGPALSALDGFSIGMGATGAMFVLGSMREIIGNGTLFDGADGLLGDWAKVLRVEIFHTDSPFLLAMLPPGAFIGLGLMLAVKYLIDEKMKKRRAEAVAAELPSGETGNV</sequence>
<proteinExistence type="inferred from homology"/>
<gene>
    <name evidence="1" type="primary">rnfE</name>
    <name type="ordered locus">CKO_01644</name>
</gene>